<gene>
    <name type="ORF">ORF72</name>
</gene>
<name>CSPL_TNAVC</name>
<organism>
    <name type="scientific">Trichoplusia ni ascovirus 2c</name>
    <name type="common">TnAV-2c</name>
    <dbReference type="NCBI Taxonomy" id="328615"/>
    <lineage>
        <taxon>Viruses</taxon>
        <taxon>Varidnaviria</taxon>
        <taxon>Bamfordvirae</taxon>
        <taxon>Nucleocytoviricota</taxon>
        <taxon>Megaviricetes</taxon>
        <taxon>Pimascovirales</taxon>
        <taxon>Ascoviridae</taxon>
        <taxon>Ascovirus</taxon>
    </lineage>
</organism>
<accession>Q06VK9</accession>
<proteinExistence type="inferred from homology"/>
<evidence type="ECO:0000305" key="1"/>
<keyword id="KW-1185">Reference proteome</keyword>
<dbReference type="EMBL" id="DQ517337">
    <property type="protein sequence ID" value="ABF70589.1"/>
    <property type="molecule type" value="Genomic_DNA"/>
</dbReference>
<dbReference type="RefSeq" id="YP_803295.1">
    <property type="nucleotide sequence ID" value="NC_008518.1"/>
</dbReference>
<dbReference type="SMR" id="Q06VK9"/>
<dbReference type="KEGG" id="vg:5141777"/>
<dbReference type="OrthoDB" id="36710at10239"/>
<dbReference type="Proteomes" id="UP000001323">
    <property type="component" value="Genome"/>
</dbReference>
<dbReference type="GO" id="GO:0004197">
    <property type="term" value="F:cysteine-type endopeptidase activity"/>
    <property type="evidence" value="ECO:0007669"/>
    <property type="project" value="InterPro"/>
</dbReference>
<dbReference type="GO" id="GO:0043525">
    <property type="term" value="P:positive regulation of neuron apoptotic process"/>
    <property type="evidence" value="ECO:0007669"/>
    <property type="project" value="TreeGrafter"/>
</dbReference>
<dbReference type="GO" id="GO:0006508">
    <property type="term" value="P:proteolysis"/>
    <property type="evidence" value="ECO:0007669"/>
    <property type="project" value="InterPro"/>
</dbReference>
<dbReference type="Gene3D" id="3.40.50.1460">
    <property type="match status" value="1"/>
</dbReference>
<dbReference type="InterPro" id="IPR029030">
    <property type="entry name" value="Caspase-like_dom_sf"/>
</dbReference>
<dbReference type="InterPro" id="IPR002398">
    <property type="entry name" value="Pept_C14"/>
</dbReference>
<dbReference type="InterPro" id="IPR011600">
    <property type="entry name" value="Pept_C14_caspase"/>
</dbReference>
<dbReference type="InterPro" id="IPR001309">
    <property type="entry name" value="Pept_C14_p20"/>
</dbReference>
<dbReference type="PANTHER" id="PTHR10454:SF232">
    <property type="entry name" value="AT03047P-RELATED"/>
    <property type="match status" value="1"/>
</dbReference>
<dbReference type="PANTHER" id="PTHR10454">
    <property type="entry name" value="CASPASE"/>
    <property type="match status" value="1"/>
</dbReference>
<dbReference type="Pfam" id="PF00656">
    <property type="entry name" value="Peptidase_C14"/>
    <property type="match status" value="1"/>
</dbReference>
<dbReference type="SUPFAM" id="SSF52129">
    <property type="entry name" value="Caspase-like"/>
    <property type="match status" value="1"/>
</dbReference>
<dbReference type="PROSITE" id="PS50208">
    <property type="entry name" value="CASPASE_P20"/>
    <property type="match status" value="1"/>
</dbReference>
<organismHost>
    <name type="scientific">Noctuidae</name>
    <name type="common">owlet moths</name>
    <dbReference type="NCBI Taxonomy" id="7100"/>
</organismHost>
<reference key="1">
    <citation type="journal article" date="2006" name="Virology">
        <title>Sequence and organization of the Trichoplusia ni ascovirus 2c (Ascoviridae) genome.</title>
        <authorList>
            <person name="Wang L."/>
            <person name="Xue J."/>
            <person name="Seaborn C.P."/>
            <person name="Arif B.M."/>
            <person name="Cheng X.W."/>
        </authorList>
    </citation>
    <scope>NUCLEOTIDE SEQUENCE [LARGE SCALE GENOMIC DNA]</scope>
</reference>
<protein>
    <recommendedName>
        <fullName>Caspase-like protein</fullName>
    </recommendedName>
</protein>
<feature type="chain" id="PRO_0000329069" description="Caspase-like protein">
    <location>
        <begin position="1"/>
        <end position="231"/>
    </location>
</feature>
<comment type="similarity">
    <text evidence="1">Belongs to the peptidase C14A family.</text>
</comment>
<sequence>MSTSKNEYYDMTRGQKTCFVFSNSTYRSKKDEITLRKTFIEAGYKVRVIKDTNLIKTTNILSEFSEFAKKKKVCAVIVFILSHGVVNGEVYVGSDRCNLNYMVNAMDTEILRGVPKMLFVQINKEYRSVYENFKDVIVKFMSNTNLATLPDTTVVSIEDPCPAHAEYKPASPDVPLDFYYRESWYTNQSKDVTRVGSPMIQELCKLLRIDAEFCEIMALLDKKLEKFHIEP</sequence>